<feature type="chain" id="PRO_0000167124" description="Cysteine synthase">
    <location>
        <begin position="1"/>
        <end position="325"/>
    </location>
</feature>
<feature type="binding site" evidence="1">
    <location>
        <position position="80"/>
    </location>
    <ligand>
        <name>pyridoxal 5'-phosphate</name>
        <dbReference type="ChEBI" id="CHEBI:597326"/>
    </ligand>
</feature>
<feature type="binding site" evidence="1">
    <location>
        <begin position="184"/>
        <end position="188"/>
    </location>
    <ligand>
        <name>pyridoxal 5'-phosphate</name>
        <dbReference type="ChEBI" id="CHEBI:597326"/>
    </ligand>
</feature>
<feature type="binding site" evidence="1">
    <location>
        <position position="272"/>
    </location>
    <ligand>
        <name>pyridoxal 5'-phosphate</name>
        <dbReference type="ChEBI" id="CHEBI:597326"/>
    </ligand>
</feature>
<feature type="modified residue" description="N6-(pyridoxal phosphate)lysine" evidence="1">
    <location>
        <position position="49"/>
    </location>
</feature>
<accession>O81154</accession>
<keyword id="KW-0028">Amino-acid biosynthesis</keyword>
<keyword id="KW-0198">Cysteine biosynthesis</keyword>
<keyword id="KW-0963">Cytoplasm</keyword>
<keyword id="KW-0663">Pyridoxal phosphate</keyword>
<keyword id="KW-1185">Reference proteome</keyword>
<keyword id="KW-0808">Transferase</keyword>
<sequence length="325" mass="34342">MAGEKIGIAKDVTELIGNTPLVYLNNVVDGCVARVAAKLESMEPCSSVKDRIGYSMITDAEEKGLIKPGESVLIEPTSGNTGVGLAFMAAAKGYKLIITMPSSMSLERRIILRGFRSELVLTDPAKGMKGAISKAEEIKAKTPNSYILQQFENPANPKIHYETTGPEIWKGSNGKVDALASGIGTGGTITGSGKYLREQNPNVKLYGVEPVESAILSGGKPGPHKIQGIGAGFIPGVLEVNLIDDVVQVSSEESIEMAKLLALKEGLLVGISSGAAAAAAIKVAKRPENAGKLIVVIFPSFGERYLSSVLFETVRREAENMTVEP</sequence>
<protein>
    <recommendedName>
        <fullName>Cysteine synthase</fullName>
        <ecNumber>2.5.1.47</ecNumber>
    </recommendedName>
    <alternativeName>
        <fullName>CSase A</fullName>
        <shortName>CS-A</shortName>
    </alternativeName>
    <alternativeName>
        <fullName>O-acetylserine (thiol)-lyase</fullName>
        <shortName>OAS-TL A</shortName>
    </alternativeName>
    <alternativeName>
        <fullName>O-acetylserine sulfhydrylase</fullName>
    </alternativeName>
</protein>
<reference key="1">
    <citation type="online journal article" date="1998" name="Plant Gene Register">
        <title>Isolation of cDNAs encoding cytosolic and plastidic cysteine synthase isoforms from Solanum tuberosum.</title>
        <authorList>
            <person name="Hesse H."/>
            <person name="Hoefgen R."/>
        </authorList>
        <locator>PGR98-057</locator>
    </citation>
    <scope>NUCLEOTIDE SEQUENCE [MRNA]</scope>
    <source>
        <strain>cv. Berolina</strain>
    </source>
</reference>
<dbReference type="EC" id="2.5.1.47"/>
<dbReference type="EMBL" id="AF044172">
    <property type="protein sequence ID" value="AAC25635.1"/>
    <property type="molecule type" value="mRNA"/>
</dbReference>
<dbReference type="PIR" id="T07001">
    <property type="entry name" value="T07001"/>
</dbReference>
<dbReference type="SMR" id="O81154"/>
<dbReference type="FunCoup" id="O81154">
    <property type="interactions" value="1961"/>
</dbReference>
<dbReference type="STRING" id="4113.O81154"/>
<dbReference type="PaxDb" id="4113-PGSC0003DMT400082113"/>
<dbReference type="eggNOG" id="KOG1252">
    <property type="taxonomic scope" value="Eukaryota"/>
</dbReference>
<dbReference type="InParanoid" id="O81154"/>
<dbReference type="BRENDA" id="2.5.1.47">
    <property type="organism ID" value="5757"/>
</dbReference>
<dbReference type="UniPathway" id="UPA00136">
    <property type="reaction ID" value="UER00200"/>
</dbReference>
<dbReference type="Proteomes" id="UP000011115">
    <property type="component" value="Unassembled WGS sequence"/>
</dbReference>
<dbReference type="ExpressionAtlas" id="O81154">
    <property type="expression patterns" value="baseline"/>
</dbReference>
<dbReference type="GO" id="GO:0005737">
    <property type="term" value="C:cytoplasm"/>
    <property type="evidence" value="ECO:0000318"/>
    <property type="project" value="GO_Central"/>
</dbReference>
<dbReference type="GO" id="GO:0004124">
    <property type="term" value="F:cysteine synthase activity"/>
    <property type="evidence" value="ECO:0000318"/>
    <property type="project" value="GO_Central"/>
</dbReference>
<dbReference type="GO" id="GO:0006535">
    <property type="term" value="P:cysteine biosynthetic process from serine"/>
    <property type="evidence" value="ECO:0000318"/>
    <property type="project" value="GO_Central"/>
</dbReference>
<dbReference type="CDD" id="cd01561">
    <property type="entry name" value="CBS_like"/>
    <property type="match status" value="1"/>
</dbReference>
<dbReference type="FunFam" id="3.40.50.1100:FF:000006">
    <property type="entry name" value="Cysteine synthase"/>
    <property type="match status" value="1"/>
</dbReference>
<dbReference type="FunFam" id="3.40.50.1100:FF:000130">
    <property type="entry name" value="Cysteine synthase"/>
    <property type="match status" value="1"/>
</dbReference>
<dbReference type="Gene3D" id="3.40.50.1100">
    <property type="match status" value="2"/>
</dbReference>
<dbReference type="InterPro" id="IPR005856">
    <property type="entry name" value="Cys_synth"/>
</dbReference>
<dbReference type="InterPro" id="IPR050214">
    <property type="entry name" value="Cys_Synth/Cystath_Beta-Synth"/>
</dbReference>
<dbReference type="InterPro" id="IPR005859">
    <property type="entry name" value="CysK"/>
</dbReference>
<dbReference type="InterPro" id="IPR001216">
    <property type="entry name" value="P-phosphate_BS"/>
</dbReference>
<dbReference type="InterPro" id="IPR001926">
    <property type="entry name" value="TrpB-like_PALP"/>
</dbReference>
<dbReference type="InterPro" id="IPR036052">
    <property type="entry name" value="TrpB-like_PALP_sf"/>
</dbReference>
<dbReference type="NCBIfam" id="TIGR01139">
    <property type="entry name" value="cysK"/>
    <property type="match status" value="1"/>
</dbReference>
<dbReference type="NCBIfam" id="TIGR01136">
    <property type="entry name" value="cysKM"/>
    <property type="match status" value="1"/>
</dbReference>
<dbReference type="PANTHER" id="PTHR10314">
    <property type="entry name" value="CYSTATHIONINE BETA-SYNTHASE"/>
    <property type="match status" value="1"/>
</dbReference>
<dbReference type="Pfam" id="PF00291">
    <property type="entry name" value="PALP"/>
    <property type="match status" value="1"/>
</dbReference>
<dbReference type="SUPFAM" id="SSF53686">
    <property type="entry name" value="Tryptophan synthase beta subunit-like PLP-dependent enzymes"/>
    <property type="match status" value="1"/>
</dbReference>
<dbReference type="PROSITE" id="PS00901">
    <property type="entry name" value="CYS_SYNTHASE"/>
    <property type="match status" value="1"/>
</dbReference>
<evidence type="ECO:0000250" key="1"/>
<evidence type="ECO:0000305" key="2"/>
<name>CYSK_SOLTU</name>
<proteinExistence type="evidence at transcript level"/>
<organism>
    <name type="scientific">Solanum tuberosum</name>
    <name type="common">Potato</name>
    <dbReference type="NCBI Taxonomy" id="4113"/>
    <lineage>
        <taxon>Eukaryota</taxon>
        <taxon>Viridiplantae</taxon>
        <taxon>Streptophyta</taxon>
        <taxon>Embryophyta</taxon>
        <taxon>Tracheophyta</taxon>
        <taxon>Spermatophyta</taxon>
        <taxon>Magnoliopsida</taxon>
        <taxon>eudicotyledons</taxon>
        <taxon>Gunneridae</taxon>
        <taxon>Pentapetalae</taxon>
        <taxon>asterids</taxon>
        <taxon>lamiids</taxon>
        <taxon>Solanales</taxon>
        <taxon>Solanaceae</taxon>
        <taxon>Solanoideae</taxon>
        <taxon>Solaneae</taxon>
        <taxon>Solanum</taxon>
    </lineage>
</organism>
<comment type="catalytic activity">
    <reaction>
        <text>O-acetyl-L-serine + hydrogen sulfide = L-cysteine + acetate</text>
        <dbReference type="Rhea" id="RHEA:14829"/>
        <dbReference type="ChEBI" id="CHEBI:29919"/>
        <dbReference type="ChEBI" id="CHEBI:30089"/>
        <dbReference type="ChEBI" id="CHEBI:35235"/>
        <dbReference type="ChEBI" id="CHEBI:58340"/>
        <dbReference type="EC" id="2.5.1.47"/>
    </reaction>
</comment>
<comment type="cofactor">
    <cofactor>
        <name>pyridoxal 5'-phosphate</name>
        <dbReference type="ChEBI" id="CHEBI:597326"/>
    </cofactor>
</comment>
<comment type="pathway">
    <text>Amino-acid biosynthesis; L-cysteine biosynthesis; L-cysteine from L-serine: step 2/2.</text>
</comment>
<comment type="subunit">
    <text evidence="1">Homodimer.</text>
</comment>
<comment type="subcellular location">
    <subcellularLocation>
        <location evidence="1">Cytoplasm</location>
    </subcellularLocation>
</comment>
<comment type="similarity">
    <text evidence="2">Belongs to the cysteine synthase/cystathionine beta-synthase family.</text>
</comment>